<organism>
    <name type="scientific">Streptococcus uberis (strain ATCC BAA-854 / 0140J)</name>
    <dbReference type="NCBI Taxonomy" id="218495"/>
    <lineage>
        <taxon>Bacteria</taxon>
        <taxon>Bacillati</taxon>
        <taxon>Bacillota</taxon>
        <taxon>Bacilli</taxon>
        <taxon>Lactobacillales</taxon>
        <taxon>Streptococcaceae</taxon>
        <taxon>Streptococcus</taxon>
    </lineage>
</organism>
<keyword id="KW-0030">Aminoacyl-tRNA synthetase</keyword>
<keyword id="KW-0067">ATP-binding</keyword>
<keyword id="KW-0963">Cytoplasm</keyword>
<keyword id="KW-0436">Ligase</keyword>
<keyword id="KW-0547">Nucleotide-binding</keyword>
<keyword id="KW-0648">Protein biosynthesis</keyword>
<keyword id="KW-1185">Reference proteome</keyword>
<reference key="1">
    <citation type="journal article" date="2009" name="BMC Genomics">
        <title>Evidence for niche adaptation in the genome of the bovine pathogen Streptococcus uberis.</title>
        <authorList>
            <person name="Ward P.N."/>
            <person name="Holden M.T.G."/>
            <person name="Leigh J.A."/>
            <person name="Lennard N."/>
            <person name="Bignell A."/>
            <person name="Barron A."/>
            <person name="Clark L."/>
            <person name="Quail M.A."/>
            <person name="Woodward J."/>
            <person name="Barrell B.G."/>
            <person name="Egan S.A."/>
            <person name="Field T.R."/>
            <person name="Maskell D."/>
            <person name="Kehoe M."/>
            <person name="Dowson C.G."/>
            <person name="Chanter N."/>
            <person name="Whatmore A.M."/>
            <person name="Bentley S.D."/>
            <person name="Parkhill J."/>
        </authorList>
    </citation>
    <scope>NUCLEOTIDE SEQUENCE [LARGE SCALE GENOMIC DNA]</scope>
    <source>
        <strain>ATCC BAA-854 / 0140J</strain>
    </source>
</reference>
<evidence type="ECO:0000255" key="1">
    <source>
        <dbReference type="HAMAP-Rule" id="MF_00255"/>
    </source>
</evidence>
<feature type="chain" id="PRO_1000197223" description="Glycine--tRNA ligase beta subunit">
    <location>
        <begin position="1"/>
        <end position="679"/>
    </location>
</feature>
<sequence>MTKNLLLELGLEELPAYVVTKSEMQLGEKVASFLKENRLSFESIQTFSTPRRLAVRVIGLAEKQEDLIEDFKGPSKKIALDENGEFSKAAQGFVRGKGLTTDAIEFRTIKGEEYVYVTKHENGKDAEEVLKDIPSVLSSLTFPVSMHWANHTFEYIRPVHTLTVLLDDNALDLDFLDIHSGQKSRGHRFLGKEVTIENANSYESDLKTVFVIVDPKERQQMILDQIKAIEIAENVAVDIDEDLLNEVLNLVEYPTAFMGTFDQKYLDVPEEVLVTSMKNHQRYFVVRDKNGHLLPNFISVRNGNSEYIENVIKGNEKVLVARLEDGEFFWKEDQKLNIEDLVAKLANVTFHEKIGSLSEHMARTKVIASHLAEKVGLSDQERQALDRASQIYKFDLLTGMVGEFDELQGIMGEKYALLAGESAMVATAIREHYLPNSAEGALPESKVGALLALADKLDTLLSFFSVDLIPSGSNDPYALRRATQGIVRILEAFGWNIPMDALVENCYQLPFESLTYTNKDQVMSFISARVDKMMGKAIPKDIRDAVLASTNYQVPQMLETAQALVSASQSQGYKTAVENLSRVFNLAEKAEQEPQINSDLFENDEEIALYKAIENLNLEGNAKEKVEQLFALNDVIVNFFDHTMVMVEDVNVKNNRLALLSSLVSKAQTLAQFNLLNSK</sequence>
<accession>B9DV92</accession>
<proteinExistence type="inferred from homology"/>
<gene>
    <name evidence="1" type="primary">glyS</name>
    <name type="ordered locus">SUB1435</name>
</gene>
<comment type="catalytic activity">
    <reaction evidence="1">
        <text>tRNA(Gly) + glycine + ATP = glycyl-tRNA(Gly) + AMP + diphosphate</text>
        <dbReference type="Rhea" id="RHEA:16013"/>
        <dbReference type="Rhea" id="RHEA-COMP:9664"/>
        <dbReference type="Rhea" id="RHEA-COMP:9683"/>
        <dbReference type="ChEBI" id="CHEBI:30616"/>
        <dbReference type="ChEBI" id="CHEBI:33019"/>
        <dbReference type="ChEBI" id="CHEBI:57305"/>
        <dbReference type="ChEBI" id="CHEBI:78442"/>
        <dbReference type="ChEBI" id="CHEBI:78522"/>
        <dbReference type="ChEBI" id="CHEBI:456215"/>
        <dbReference type="EC" id="6.1.1.14"/>
    </reaction>
</comment>
<comment type="subunit">
    <text evidence="1">Tetramer of two alpha and two beta subunits.</text>
</comment>
<comment type="subcellular location">
    <subcellularLocation>
        <location evidence="1">Cytoplasm</location>
    </subcellularLocation>
</comment>
<comment type="similarity">
    <text evidence="1">Belongs to the class-II aminoacyl-tRNA synthetase family.</text>
</comment>
<name>SYGB_STRU0</name>
<protein>
    <recommendedName>
        <fullName evidence="1">Glycine--tRNA ligase beta subunit</fullName>
        <ecNumber evidence="1">6.1.1.14</ecNumber>
    </recommendedName>
    <alternativeName>
        <fullName evidence="1">Glycyl-tRNA synthetase beta subunit</fullName>
        <shortName evidence="1">GlyRS</shortName>
    </alternativeName>
</protein>
<dbReference type="EC" id="6.1.1.14" evidence="1"/>
<dbReference type="EMBL" id="AM946015">
    <property type="protein sequence ID" value="CAR43106.1"/>
    <property type="molecule type" value="Genomic_DNA"/>
</dbReference>
<dbReference type="RefSeq" id="WP_015911754.1">
    <property type="nucleotide sequence ID" value="NC_012004.1"/>
</dbReference>
<dbReference type="SMR" id="B9DV92"/>
<dbReference type="STRING" id="218495.SUB1435"/>
<dbReference type="GeneID" id="93826758"/>
<dbReference type="KEGG" id="sub:SUB1435"/>
<dbReference type="eggNOG" id="COG0751">
    <property type="taxonomic scope" value="Bacteria"/>
</dbReference>
<dbReference type="HOGENOM" id="CLU_007220_2_2_9"/>
<dbReference type="OrthoDB" id="9775440at2"/>
<dbReference type="Proteomes" id="UP000000449">
    <property type="component" value="Chromosome"/>
</dbReference>
<dbReference type="GO" id="GO:0005829">
    <property type="term" value="C:cytosol"/>
    <property type="evidence" value="ECO:0007669"/>
    <property type="project" value="TreeGrafter"/>
</dbReference>
<dbReference type="GO" id="GO:0004814">
    <property type="term" value="F:arginine-tRNA ligase activity"/>
    <property type="evidence" value="ECO:0007669"/>
    <property type="project" value="InterPro"/>
</dbReference>
<dbReference type="GO" id="GO:0005524">
    <property type="term" value="F:ATP binding"/>
    <property type="evidence" value="ECO:0007669"/>
    <property type="project" value="UniProtKB-UniRule"/>
</dbReference>
<dbReference type="GO" id="GO:0004820">
    <property type="term" value="F:glycine-tRNA ligase activity"/>
    <property type="evidence" value="ECO:0007669"/>
    <property type="project" value="UniProtKB-UniRule"/>
</dbReference>
<dbReference type="GO" id="GO:0006420">
    <property type="term" value="P:arginyl-tRNA aminoacylation"/>
    <property type="evidence" value="ECO:0007669"/>
    <property type="project" value="InterPro"/>
</dbReference>
<dbReference type="GO" id="GO:0006426">
    <property type="term" value="P:glycyl-tRNA aminoacylation"/>
    <property type="evidence" value="ECO:0007669"/>
    <property type="project" value="UniProtKB-UniRule"/>
</dbReference>
<dbReference type="HAMAP" id="MF_00255">
    <property type="entry name" value="Gly_tRNA_synth_beta"/>
    <property type="match status" value="1"/>
</dbReference>
<dbReference type="InterPro" id="IPR008909">
    <property type="entry name" value="DALR_anticod-bd"/>
</dbReference>
<dbReference type="InterPro" id="IPR015944">
    <property type="entry name" value="Gly-tRNA-synth_bsu"/>
</dbReference>
<dbReference type="InterPro" id="IPR006194">
    <property type="entry name" value="Gly-tRNA-synth_heterodimer"/>
</dbReference>
<dbReference type="NCBIfam" id="TIGR00211">
    <property type="entry name" value="glyS"/>
    <property type="match status" value="1"/>
</dbReference>
<dbReference type="PANTHER" id="PTHR30075:SF2">
    <property type="entry name" value="GLYCINE--TRNA LIGASE, CHLOROPLASTIC_MITOCHONDRIAL 2"/>
    <property type="match status" value="1"/>
</dbReference>
<dbReference type="PANTHER" id="PTHR30075">
    <property type="entry name" value="GLYCYL-TRNA SYNTHETASE"/>
    <property type="match status" value="1"/>
</dbReference>
<dbReference type="Pfam" id="PF05746">
    <property type="entry name" value="DALR_1"/>
    <property type="match status" value="1"/>
</dbReference>
<dbReference type="Pfam" id="PF02092">
    <property type="entry name" value="tRNA_synt_2f"/>
    <property type="match status" value="1"/>
</dbReference>
<dbReference type="PRINTS" id="PR01045">
    <property type="entry name" value="TRNASYNTHGB"/>
</dbReference>
<dbReference type="SUPFAM" id="SSF109604">
    <property type="entry name" value="HD-domain/PDEase-like"/>
    <property type="match status" value="1"/>
</dbReference>
<dbReference type="PROSITE" id="PS50861">
    <property type="entry name" value="AA_TRNA_LIGASE_II_GLYAB"/>
    <property type="match status" value="1"/>
</dbReference>